<keyword id="KW-0028">Amino-acid biosynthesis</keyword>
<keyword id="KW-0368">Histidine biosynthesis</keyword>
<keyword id="KW-0479">Metal-binding</keyword>
<keyword id="KW-0520">NAD</keyword>
<keyword id="KW-0560">Oxidoreductase</keyword>
<keyword id="KW-0614">Plasmid</keyword>
<keyword id="KW-1185">Reference proteome</keyword>
<keyword id="KW-0862">Zinc</keyword>
<protein>
    <recommendedName>
        <fullName evidence="1">Histidinol dehydrogenase</fullName>
        <shortName evidence="1">HDH</shortName>
        <ecNumber evidence="1">1.1.1.23</ecNumber>
    </recommendedName>
</protein>
<evidence type="ECO:0000255" key="1">
    <source>
        <dbReference type="HAMAP-Rule" id="MF_01024"/>
    </source>
</evidence>
<accession>Q5LL27</accession>
<organism>
    <name type="scientific">Ruegeria pomeroyi (strain ATCC 700808 / DSM 15171 / DSS-3)</name>
    <name type="common">Silicibacter pomeroyi</name>
    <dbReference type="NCBI Taxonomy" id="246200"/>
    <lineage>
        <taxon>Bacteria</taxon>
        <taxon>Pseudomonadati</taxon>
        <taxon>Pseudomonadota</taxon>
        <taxon>Alphaproteobacteria</taxon>
        <taxon>Rhodobacterales</taxon>
        <taxon>Roseobacteraceae</taxon>
        <taxon>Ruegeria</taxon>
    </lineage>
</organism>
<proteinExistence type="inferred from homology"/>
<dbReference type="EC" id="1.1.1.23" evidence="1"/>
<dbReference type="EMBL" id="CP000032">
    <property type="protein sequence ID" value="AAV97336.1"/>
    <property type="molecule type" value="Genomic_DNA"/>
</dbReference>
<dbReference type="RefSeq" id="WP_011241981.1">
    <property type="nucleotide sequence ID" value="NC_006569.1"/>
</dbReference>
<dbReference type="SMR" id="Q5LL27"/>
<dbReference type="PaxDb" id="246200-SPOA0202"/>
<dbReference type="KEGG" id="sil:SPOA0202"/>
<dbReference type="eggNOG" id="COG0141">
    <property type="taxonomic scope" value="Bacteria"/>
</dbReference>
<dbReference type="HOGENOM" id="CLU_006732_3_3_5"/>
<dbReference type="OrthoDB" id="9805269at2"/>
<dbReference type="UniPathway" id="UPA00031">
    <property type="reaction ID" value="UER00014"/>
</dbReference>
<dbReference type="Proteomes" id="UP000001023">
    <property type="component" value="Plasmid megaplasmid"/>
</dbReference>
<dbReference type="GO" id="GO:0005829">
    <property type="term" value="C:cytosol"/>
    <property type="evidence" value="ECO:0007669"/>
    <property type="project" value="TreeGrafter"/>
</dbReference>
<dbReference type="GO" id="GO:0004399">
    <property type="term" value="F:histidinol dehydrogenase activity"/>
    <property type="evidence" value="ECO:0007669"/>
    <property type="project" value="UniProtKB-UniRule"/>
</dbReference>
<dbReference type="GO" id="GO:0051287">
    <property type="term" value="F:NAD binding"/>
    <property type="evidence" value="ECO:0007669"/>
    <property type="project" value="InterPro"/>
</dbReference>
<dbReference type="GO" id="GO:0008270">
    <property type="term" value="F:zinc ion binding"/>
    <property type="evidence" value="ECO:0007669"/>
    <property type="project" value="UniProtKB-UniRule"/>
</dbReference>
<dbReference type="GO" id="GO:0000105">
    <property type="term" value="P:L-histidine biosynthetic process"/>
    <property type="evidence" value="ECO:0007669"/>
    <property type="project" value="UniProtKB-UniRule"/>
</dbReference>
<dbReference type="CDD" id="cd06572">
    <property type="entry name" value="Histidinol_dh"/>
    <property type="match status" value="1"/>
</dbReference>
<dbReference type="FunFam" id="3.40.50.1980:FF:000001">
    <property type="entry name" value="Histidinol dehydrogenase"/>
    <property type="match status" value="1"/>
</dbReference>
<dbReference type="FunFam" id="3.40.50.1980:FF:000026">
    <property type="entry name" value="Histidinol dehydrogenase"/>
    <property type="match status" value="1"/>
</dbReference>
<dbReference type="Gene3D" id="1.20.5.1300">
    <property type="match status" value="1"/>
</dbReference>
<dbReference type="Gene3D" id="3.40.50.1980">
    <property type="entry name" value="Nitrogenase molybdenum iron protein domain"/>
    <property type="match status" value="2"/>
</dbReference>
<dbReference type="HAMAP" id="MF_01024">
    <property type="entry name" value="HisD"/>
    <property type="match status" value="1"/>
</dbReference>
<dbReference type="InterPro" id="IPR016161">
    <property type="entry name" value="Ald_DH/histidinol_DH"/>
</dbReference>
<dbReference type="InterPro" id="IPR001692">
    <property type="entry name" value="Histidinol_DH_CS"/>
</dbReference>
<dbReference type="InterPro" id="IPR022695">
    <property type="entry name" value="Histidinol_DH_monofunct"/>
</dbReference>
<dbReference type="InterPro" id="IPR012131">
    <property type="entry name" value="Hstdl_DH"/>
</dbReference>
<dbReference type="NCBIfam" id="TIGR00069">
    <property type="entry name" value="hisD"/>
    <property type="match status" value="1"/>
</dbReference>
<dbReference type="PANTHER" id="PTHR21256:SF2">
    <property type="entry name" value="HISTIDINE BIOSYNTHESIS TRIFUNCTIONAL PROTEIN"/>
    <property type="match status" value="1"/>
</dbReference>
<dbReference type="PANTHER" id="PTHR21256">
    <property type="entry name" value="HISTIDINOL DEHYDROGENASE HDH"/>
    <property type="match status" value="1"/>
</dbReference>
<dbReference type="Pfam" id="PF00815">
    <property type="entry name" value="Histidinol_dh"/>
    <property type="match status" value="1"/>
</dbReference>
<dbReference type="PIRSF" id="PIRSF000099">
    <property type="entry name" value="Histidinol_dh"/>
    <property type="match status" value="1"/>
</dbReference>
<dbReference type="PRINTS" id="PR00083">
    <property type="entry name" value="HOLDHDRGNASE"/>
</dbReference>
<dbReference type="SUPFAM" id="SSF53720">
    <property type="entry name" value="ALDH-like"/>
    <property type="match status" value="1"/>
</dbReference>
<dbReference type="PROSITE" id="PS00611">
    <property type="entry name" value="HISOL_DEHYDROGENASE"/>
    <property type="match status" value="1"/>
</dbReference>
<comment type="function">
    <text evidence="1">Catalyzes the sequential NAD-dependent oxidations of L-histidinol to L-histidinaldehyde and then to L-histidine.</text>
</comment>
<comment type="catalytic activity">
    <reaction evidence="1">
        <text>L-histidinol + 2 NAD(+) + H2O = L-histidine + 2 NADH + 3 H(+)</text>
        <dbReference type="Rhea" id="RHEA:20641"/>
        <dbReference type="ChEBI" id="CHEBI:15377"/>
        <dbReference type="ChEBI" id="CHEBI:15378"/>
        <dbReference type="ChEBI" id="CHEBI:57540"/>
        <dbReference type="ChEBI" id="CHEBI:57595"/>
        <dbReference type="ChEBI" id="CHEBI:57699"/>
        <dbReference type="ChEBI" id="CHEBI:57945"/>
        <dbReference type="EC" id="1.1.1.23"/>
    </reaction>
</comment>
<comment type="cofactor">
    <cofactor evidence="1">
        <name>Zn(2+)</name>
        <dbReference type="ChEBI" id="CHEBI:29105"/>
    </cofactor>
    <text evidence="1">Binds 1 zinc ion per subunit.</text>
</comment>
<comment type="pathway">
    <text evidence="1">Amino-acid biosynthesis; L-histidine biosynthesis; L-histidine from 5-phospho-alpha-D-ribose 1-diphosphate: step 9/9.</text>
</comment>
<comment type="similarity">
    <text evidence="1">Belongs to the histidinol dehydrogenase family.</text>
</comment>
<reference key="1">
    <citation type="journal article" date="2004" name="Nature">
        <title>Genome sequence of Silicibacter pomeroyi reveals adaptations to the marine environment.</title>
        <authorList>
            <person name="Moran M.A."/>
            <person name="Buchan A."/>
            <person name="Gonzalez J.M."/>
            <person name="Heidelberg J.F."/>
            <person name="Whitman W.B."/>
            <person name="Kiene R.P."/>
            <person name="Henriksen J.R."/>
            <person name="King G.M."/>
            <person name="Belas R."/>
            <person name="Fuqua C."/>
            <person name="Brinkac L.M."/>
            <person name="Lewis M."/>
            <person name="Johri S."/>
            <person name="Weaver B."/>
            <person name="Pai G."/>
            <person name="Eisen J.A."/>
            <person name="Rahe E."/>
            <person name="Sheldon W.M."/>
            <person name="Ye W."/>
            <person name="Miller T.R."/>
            <person name="Carlton J."/>
            <person name="Rasko D.A."/>
            <person name="Paulsen I.T."/>
            <person name="Ren Q."/>
            <person name="Daugherty S.C."/>
            <person name="DeBoy R.T."/>
            <person name="Dodson R.J."/>
            <person name="Durkin A.S."/>
            <person name="Madupu R."/>
            <person name="Nelson W.C."/>
            <person name="Sullivan S.A."/>
            <person name="Rosovitz M.J."/>
            <person name="Haft D.H."/>
            <person name="Selengut J."/>
            <person name="Ward N."/>
        </authorList>
    </citation>
    <scope>NUCLEOTIDE SEQUENCE [LARGE SCALE GENOMIC DNA]</scope>
    <source>
        <strain>ATCC 700808 / DSM 15171 / DSS-3</strain>
    </source>
</reference>
<reference key="2">
    <citation type="journal article" date="2014" name="Stand. Genomic Sci.">
        <title>An updated genome annotation for the model marine bacterium Ruegeria pomeroyi DSS-3.</title>
        <authorList>
            <person name="Rivers A.R."/>
            <person name="Smith C.B."/>
            <person name="Moran M.A."/>
        </authorList>
    </citation>
    <scope>GENOME REANNOTATION</scope>
    <source>
        <strain>ATCC 700808 / DSM 15171 / DSS-3</strain>
    </source>
</reference>
<gene>
    <name evidence="1" type="primary">hisD</name>
    <name type="ordered locus">SPOA0202</name>
</gene>
<geneLocation type="plasmid">
    <name>megaplasmid Spo</name>
</geneLocation>
<feature type="chain" id="PRO_0000135848" description="Histidinol dehydrogenase">
    <location>
        <begin position="1"/>
        <end position="433"/>
    </location>
</feature>
<feature type="active site" description="Proton acceptor" evidence="1">
    <location>
        <position position="327"/>
    </location>
</feature>
<feature type="active site" description="Proton acceptor" evidence="1">
    <location>
        <position position="328"/>
    </location>
</feature>
<feature type="binding site" evidence="1">
    <location>
        <position position="130"/>
    </location>
    <ligand>
        <name>NAD(+)</name>
        <dbReference type="ChEBI" id="CHEBI:57540"/>
    </ligand>
</feature>
<feature type="binding site" evidence="1">
    <location>
        <position position="191"/>
    </location>
    <ligand>
        <name>NAD(+)</name>
        <dbReference type="ChEBI" id="CHEBI:57540"/>
    </ligand>
</feature>
<feature type="binding site" evidence="1">
    <location>
        <position position="214"/>
    </location>
    <ligand>
        <name>NAD(+)</name>
        <dbReference type="ChEBI" id="CHEBI:57540"/>
    </ligand>
</feature>
<feature type="binding site" evidence="1">
    <location>
        <position position="237"/>
    </location>
    <ligand>
        <name>substrate</name>
    </ligand>
</feature>
<feature type="binding site" evidence="1">
    <location>
        <position position="259"/>
    </location>
    <ligand>
        <name>substrate</name>
    </ligand>
</feature>
<feature type="binding site" evidence="1">
    <location>
        <position position="259"/>
    </location>
    <ligand>
        <name>Zn(2+)</name>
        <dbReference type="ChEBI" id="CHEBI:29105"/>
    </ligand>
</feature>
<feature type="binding site" evidence="1">
    <location>
        <position position="262"/>
    </location>
    <ligand>
        <name>substrate</name>
    </ligand>
</feature>
<feature type="binding site" evidence="1">
    <location>
        <position position="262"/>
    </location>
    <ligand>
        <name>Zn(2+)</name>
        <dbReference type="ChEBI" id="CHEBI:29105"/>
    </ligand>
</feature>
<feature type="binding site" evidence="1">
    <location>
        <position position="328"/>
    </location>
    <ligand>
        <name>substrate</name>
    </ligand>
</feature>
<feature type="binding site" evidence="1">
    <location>
        <position position="361"/>
    </location>
    <ligand>
        <name>substrate</name>
    </ligand>
</feature>
<feature type="binding site" evidence="1">
    <location>
        <position position="361"/>
    </location>
    <ligand>
        <name>Zn(2+)</name>
        <dbReference type="ChEBI" id="CHEBI:29105"/>
    </ligand>
</feature>
<feature type="binding site" evidence="1">
    <location>
        <position position="415"/>
    </location>
    <ligand>
        <name>substrate</name>
    </ligand>
</feature>
<feature type="binding site" evidence="1">
    <location>
        <position position="420"/>
    </location>
    <ligand>
        <name>substrate</name>
    </ligand>
</feature>
<feature type="binding site" evidence="1">
    <location>
        <position position="420"/>
    </location>
    <ligand>
        <name>Zn(2+)</name>
        <dbReference type="ChEBI" id="CHEBI:29105"/>
    </ligand>
</feature>
<sequence length="433" mass="45887">MPQFLDSRQPDFETAFTALLGAKREDSPDVDAVVAGIIADVRARGDAAVIELTERFDRVALTPQSLRFSTEEIAQAVDEVPAPERAALELAAARIRAYHERQMPQDADWTDDTGARLGWRWSAVSAAGLYVPGGLASYPSSVLMNAIPAKVAGVGRLAIAVPTPDGQVNPLVLLAAQISGVDEVYRIGGAQAIAALAYGTDTIAPVDKITGPGNAFVAAAKRRVFGKVGIDMIAGPSEILVIADRDNDPDWIALDLLSQAEHDESAQSILITDDAAFGRAVAEAVDKRLETLERRAIAGVSWRDFGAVITVSDLDEAAALSNRIAPEHLELCVSDPEALAARTIHAGAIFLGQYTPEAIGDYVGGPNHVLPTARSARFSSGLSVMDFLKRTTMSRMTPEALRAIGPAAAQLARSESLEAHGLSVQARLDRLNG</sequence>
<name>HISX_RUEPO</name>